<reference key="1">
    <citation type="journal article" date="2009" name="Appl. Environ. Microbiol.">
        <title>Genome analysis of the meat starter culture bacterium Staphylococcus carnosus TM300.</title>
        <authorList>
            <person name="Rosenstein R."/>
            <person name="Nerz C."/>
            <person name="Biswas L."/>
            <person name="Resch A."/>
            <person name="Raddatz G."/>
            <person name="Schuster S.C."/>
            <person name="Goetz F."/>
        </authorList>
    </citation>
    <scope>NUCLEOTIDE SEQUENCE [LARGE SCALE GENOMIC DNA]</scope>
    <source>
        <strain>TM300</strain>
    </source>
</reference>
<comment type="function">
    <text evidence="1">Large subunit of the glutamine-dependent carbamoyl phosphate synthetase (CPSase). CPSase catalyzes the formation of carbamoyl phosphate from the ammonia moiety of glutamine, carbonate, and phosphate donated by ATP, constituting the first step of 2 biosynthetic pathways, one leading to arginine and/or urea and the other to pyrimidine nucleotides. The large subunit (synthetase) binds the substrates ammonia (free or transferred from glutamine from the small subunit), hydrogencarbonate and ATP and carries out an ATP-coupled ligase reaction, activating hydrogencarbonate by forming carboxy phosphate which reacts with ammonia to form carbamoyl phosphate.</text>
</comment>
<comment type="catalytic activity">
    <reaction evidence="1">
        <text>hydrogencarbonate + L-glutamine + 2 ATP + H2O = carbamoyl phosphate + L-glutamate + 2 ADP + phosphate + 2 H(+)</text>
        <dbReference type="Rhea" id="RHEA:18633"/>
        <dbReference type="ChEBI" id="CHEBI:15377"/>
        <dbReference type="ChEBI" id="CHEBI:15378"/>
        <dbReference type="ChEBI" id="CHEBI:17544"/>
        <dbReference type="ChEBI" id="CHEBI:29985"/>
        <dbReference type="ChEBI" id="CHEBI:30616"/>
        <dbReference type="ChEBI" id="CHEBI:43474"/>
        <dbReference type="ChEBI" id="CHEBI:58228"/>
        <dbReference type="ChEBI" id="CHEBI:58359"/>
        <dbReference type="ChEBI" id="CHEBI:456216"/>
        <dbReference type="EC" id="6.3.5.5"/>
    </reaction>
</comment>
<comment type="catalytic activity">
    <molecule>Carbamoyl phosphate synthase large chain</molecule>
    <reaction evidence="1">
        <text>hydrogencarbonate + NH4(+) + 2 ATP = carbamoyl phosphate + 2 ADP + phosphate + 2 H(+)</text>
        <dbReference type="Rhea" id="RHEA:18029"/>
        <dbReference type="ChEBI" id="CHEBI:15378"/>
        <dbReference type="ChEBI" id="CHEBI:17544"/>
        <dbReference type="ChEBI" id="CHEBI:28938"/>
        <dbReference type="ChEBI" id="CHEBI:30616"/>
        <dbReference type="ChEBI" id="CHEBI:43474"/>
        <dbReference type="ChEBI" id="CHEBI:58228"/>
        <dbReference type="ChEBI" id="CHEBI:456216"/>
        <dbReference type="EC" id="6.3.4.16"/>
    </reaction>
</comment>
<comment type="cofactor">
    <cofactor evidence="1">
        <name>Mg(2+)</name>
        <dbReference type="ChEBI" id="CHEBI:18420"/>
    </cofactor>
    <cofactor evidence="1">
        <name>Mn(2+)</name>
        <dbReference type="ChEBI" id="CHEBI:29035"/>
    </cofactor>
    <text evidence="1">Binds 4 Mg(2+) or Mn(2+) ions per subunit.</text>
</comment>
<comment type="pathway">
    <text evidence="1">Amino-acid biosynthesis; L-arginine biosynthesis; carbamoyl phosphate from bicarbonate: step 1/1.</text>
</comment>
<comment type="pathway">
    <text evidence="1">Pyrimidine metabolism; UMP biosynthesis via de novo pathway; (S)-dihydroorotate from bicarbonate: step 1/3.</text>
</comment>
<comment type="subunit">
    <text evidence="1">Composed of two chains; the small (or glutamine) chain promotes the hydrolysis of glutamine to ammonia, which is used by the large (or ammonia) chain to synthesize carbamoyl phosphate. Tetramer of heterodimers (alpha,beta)4.</text>
</comment>
<comment type="domain">
    <text evidence="1">The large subunit is composed of 2 ATP-grasp domains that are involved in binding the 2 ATP molecules needed for carbamoyl phosphate synthesis. The N-terminal ATP-grasp domain (referred to as the carboxyphosphate synthetic component) catalyzes the ATP-dependent phosphorylation of hydrogencarbonate to carboxyphosphate and the subsequent nucleophilic attack by ammonia to form a carbamate intermediate. The C-terminal ATP-grasp domain (referred to as the carbamoyl phosphate synthetic component) then catalyzes the phosphorylation of carbamate with the second ATP to form the end product carbamoyl phosphate. The reactive and unstable enzyme intermediates are sequentially channeled from one active site to the next through the interior of the protein over a distance of at least 96 A.</text>
</comment>
<comment type="similarity">
    <text evidence="1">Belongs to the CarB family.</text>
</comment>
<feature type="chain" id="PRO_1000164714" description="Carbamoyl phosphate synthase large chain">
    <location>
        <begin position="1"/>
        <end position="1057"/>
    </location>
</feature>
<feature type="domain" description="ATP-grasp 1" evidence="1">
    <location>
        <begin position="133"/>
        <end position="327"/>
    </location>
</feature>
<feature type="domain" description="ATP-grasp 2" evidence="1">
    <location>
        <begin position="671"/>
        <end position="861"/>
    </location>
</feature>
<feature type="domain" description="MGS-like" evidence="1">
    <location>
        <begin position="930"/>
        <end position="1057"/>
    </location>
</feature>
<feature type="region of interest" description="Carboxyphosphate synthetic domain" evidence="1">
    <location>
        <begin position="1"/>
        <end position="401"/>
    </location>
</feature>
<feature type="region of interest" description="Oligomerization domain" evidence="1">
    <location>
        <begin position="402"/>
        <end position="546"/>
    </location>
</feature>
<feature type="region of interest" description="Carbamoyl phosphate synthetic domain" evidence="1">
    <location>
        <begin position="547"/>
        <end position="929"/>
    </location>
</feature>
<feature type="region of interest" description="Allosteric domain" evidence="1">
    <location>
        <begin position="930"/>
        <end position="1057"/>
    </location>
</feature>
<feature type="binding site" evidence="1">
    <location>
        <position position="129"/>
    </location>
    <ligand>
        <name>ATP</name>
        <dbReference type="ChEBI" id="CHEBI:30616"/>
        <label>1</label>
    </ligand>
</feature>
<feature type="binding site" evidence="1">
    <location>
        <position position="169"/>
    </location>
    <ligand>
        <name>ATP</name>
        <dbReference type="ChEBI" id="CHEBI:30616"/>
        <label>1</label>
    </ligand>
</feature>
<feature type="binding site" evidence="1">
    <location>
        <position position="175"/>
    </location>
    <ligand>
        <name>ATP</name>
        <dbReference type="ChEBI" id="CHEBI:30616"/>
        <label>1</label>
    </ligand>
</feature>
<feature type="binding site" evidence="1">
    <location>
        <position position="176"/>
    </location>
    <ligand>
        <name>ATP</name>
        <dbReference type="ChEBI" id="CHEBI:30616"/>
        <label>1</label>
    </ligand>
</feature>
<feature type="binding site" evidence="1">
    <location>
        <position position="208"/>
    </location>
    <ligand>
        <name>ATP</name>
        <dbReference type="ChEBI" id="CHEBI:30616"/>
        <label>1</label>
    </ligand>
</feature>
<feature type="binding site" evidence="1">
    <location>
        <position position="210"/>
    </location>
    <ligand>
        <name>ATP</name>
        <dbReference type="ChEBI" id="CHEBI:30616"/>
        <label>1</label>
    </ligand>
</feature>
<feature type="binding site" evidence="1">
    <location>
        <position position="215"/>
    </location>
    <ligand>
        <name>ATP</name>
        <dbReference type="ChEBI" id="CHEBI:30616"/>
        <label>1</label>
    </ligand>
</feature>
<feature type="binding site" evidence="1">
    <location>
        <position position="241"/>
    </location>
    <ligand>
        <name>ATP</name>
        <dbReference type="ChEBI" id="CHEBI:30616"/>
        <label>1</label>
    </ligand>
</feature>
<feature type="binding site" evidence="1">
    <location>
        <position position="242"/>
    </location>
    <ligand>
        <name>ATP</name>
        <dbReference type="ChEBI" id="CHEBI:30616"/>
        <label>1</label>
    </ligand>
</feature>
<feature type="binding site" evidence="1">
    <location>
        <position position="243"/>
    </location>
    <ligand>
        <name>ATP</name>
        <dbReference type="ChEBI" id="CHEBI:30616"/>
        <label>1</label>
    </ligand>
</feature>
<feature type="binding site" evidence="1">
    <location>
        <position position="284"/>
    </location>
    <ligand>
        <name>ATP</name>
        <dbReference type="ChEBI" id="CHEBI:30616"/>
        <label>1</label>
    </ligand>
</feature>
<feature type="binding site" evidence="1">
    <location>
        <position position="284"/>
    </location>
    <ligand>
        <name>Mg(2+)</name>
        <dbReference type="ChEBI" id="CHEBI:18420"/>
        <label>1</label>
    </ligand>
</feature>
<feature type="binding site" evidence="1">
    <location>
        <position position="284"/>
    </location>
    <ligand>
        <name>Mn(2+)</name>
        <dbReference type="ChEBI" id="CHEBI:29035"/>
        <label>1</label>
    </ligand>
</feature>
<feature type="binding site" evidence="1">
    <location>
        <position position="298"/>
    </location>
    <ligand>
        <name>ATP</name>
        <dbReference type="ChEBI" id="CHEBI:30616"/>
        <label>1</label>
    </ligand>
</feature>
<feature type="binding site" evidence="1">
    <location>
        <position position="298"/>
    </location>
    <ligand>
        <name>Mg(2+)</name>
        <dbReference type="ChEBI" id="CHEBI:18420"/>
        <label>1</label>
    </ligand>
</feature>
<feature type="binding site" evidence="1">
    <location>
        <position position="298"/>
    </location>
    <ligand>
        <name>Mg(2+)</name>
        <dbReference type="ChEBI" id="CHEBI:18420"/>
        <label>2</label>
    </ligand>
</feature>
<feature type="binding site" evidence="1">
    <location>
        <position position="298"/>
    </location>
    <ligand>
        <name>Mn(2+)</name>
        <dbReference type="ChEBI" id="CHEBI:29035"/>
        <label>1</label>
    </ligand>
</feature>
<feature type="binding site" evidence="1">
    <location>
        <position position="298"/>
    </location>
    <ligand>
        <name>Mn(2+)</name>
        <dbReference type="ChEBI" id="CHEBI:29035"/>
        <label>2</label>
    </ligand>
</feature>
<feature type="binding site" evidence="1">
    <location>
        <position position="300"/>
    </location>
    <ligand>
        <name>Mg(2+)</name>
        <dbReference type="ChEBI" id="CHEBI:18420"/>
        <label>2</label>
    </ligand>
</feature>
<feature type="binding site" evidence="1">
    <location>
        <position position="300"/>
    </location>
    <ligand>
        <name>Mn(2+)</name>
        <dbReference type="ChEBI" id="CHEBI:29035"/>
        <label>2</label>
    </ligand>
</feature>
<feature type="binding site" evidence="1">
    <location>
        <position position="707"/>
    </location>
    <ligand>
        <name>ATP</name>
        <dbReference type="ChEBI" id="CHEBI:30616"/>
        <label>2</label>
    </ligand>
</feature>
<feature type="binding site" evidence="1">
    <location>
        <position position="746"/>
    </location>
    <ligand>
        <name>ATP</name>
        <dbReference type="ChEBI" id="CHEBI:30616"/>
        <label>2</label>
    </ligand>
</feature>
<feature type="binding site" evidence="1">
    <location>
        <position position="748"/>
    </location>
    <ligand>
        <name>ATP</name>
        <dbReference type="ChEBI" id="CHEBI:30616"/>
        <label>2</label>
    </ligand>
</feature>
<feature type="binding site" evidence="1">
    <location>
        <position position="752"/>
    </location>
    <ligand>
        <name>ATP</name>
        <dbReference type="ChEBI" id="CHEBI:30616"/>
        <label>2</label>
    </ligand>
</feature>
<feature type="binding site" evidence="1">
    <location>
        <position position="777"/>
    </location>
    <ligand>
        <name>ATP</name>
        <dbReference type="ChEBI" id="CHEBI:30616"/>
        <label>2</label>
    </ligand>
</feature>
<feature type="binding site" evidence="1">
    <location>
        <position position="778"/>
    </location>
    <ligand>
        <name>ATP</name>
        <dbReference type="ChEBI" id="CHEBI:30616"/>
        <label>2</label>
    </ligand>
</feature>
<feature type="binding site" evidence="1">
    <location>
        <position position="779"/>
    </location>
    <ligand>
        <name>ATP</name>
        <dbReference type="ChEBI" id="CHEBI:30616"/>
        <label>2</label>
    </ligand>
</feature>
<feature type="binding site" evidence="1">
    <location>
        <position position="780"/>
    </location>
    <ligand>
        <name>ATP</name>
        <dbReference type="ChEBI" id="CHEBI:30616"/>
        <label>2</label>
    </ligand>
</feature>
<feature type="binding site" evidence="1">
    <location>
        <position position="820"/>
    </location>
    <ligand>
        <name>ATP</name>
        <dbReference type="ChEBI" id="CHEBI:30616"/>
        <label>2</label>
    </ligand>
</feature>
<feature type="binding site" evidence="1">
    <location>
        <position position="820"/>
    </location>
    <ligand>
        <name>Mg(2+)</name>
        <dbReference type="ChEBI" id="CHEBI:18420"/>
        <label>3</label>
    </ligand>
</feature>
<feature type="binding site" evidence="1">
    <location>
        <position position="820"/>
    </location>
    <ligand>
        <name>Mn(2+)</name>
        <dbReference type="ChEBI" id="CHEBI:29035"/>
        <label>3</label>
    </ligand>
</feature>
<feature type="binding site" evidence="1">
    <location>
        <position position="832"/>
    </location>
    <ligand>
        <name>ATP</name>
        <dbReference type="ChEBI" id="CHEBI:30616"/>
        <label>2</label>
    </ligand>
</feature>
<feature type="binding site" evidence="1">
    <location>
        <position position="832"/>
    </location>
    <ligand>
        <name>Mg(2+)</name>
        <dbReference type="ChEBI" id="CHEBI:18420"/>
        <label>3</label>
    </ligand>
</feature>
<feature type="binding site" evidence="1">
    <location>
        <position position="832"/>
    </location>
    <ligand>
        <name>Mg(2+)</name>
        <dbReference type="ChEBI" id="CHEBI:18420"/>
        <label>4</label>
    </ligand>
</feature>
<feature type="binding site" evidence="1">
    <location>
        <position position="832"/>
    </location>
    <ligand>
        <name>Mn(2+)</name>
        <dbReference type="ChEBI" id="CHEBI:29035"/>
        <label>3</label>
    </ligand>
</feature>
<feature type="binding site" evidence="1">
    <location>
        <position position="832"/>
    </location>
    <ligand>
        <name>Mn(2+)</name>
        <dbReference type="ChEBI" id="CHEBI:29035"/>
        <label>4</label>
    </ligand>
</feature>
<feature type="binding site" evidence="1">
    <location>
        <position position="834"/>
    </location>
    <ligand>
        <name>Mg(2+)</name>
        <dbReference type="ChEBI" id="CHEBI:18420"/>
        <label>4</label>
    </ligand>
</feature>
<feature type="binding site" evidence="1">
    <location>
        <position position="834"/>
    </location>
    <ligand>
        <name>Mn(2+)</name>
        <dbReference type="ChEBI" id="CHEBI:29035"/>
        <label>4</label>
    </ligand>
</feature>
<name>CARB_STACT</name>
<accession>B9DPN2</accession>
<gene>
    <name evidence="1" type="primary">carB</name>
    <name type="ordered locus">Sca_0817</name>
</gene>
<organism>
    <name type="scientific">Staphylococcus carnosus (strain TM300)</name>
    <dbReference type="NCBI Taxonomy" id="396513"/>
    <lineage>
        <taxon>Bacteria</taxon>
        <taxon>Bacillati</taxon>
        <taxon>Bacillota</taxon>
        <taxon>Bacilli</taxon>
        <taxon>Bacillales</taxon>
        <taxon>Staphylococcaceae</taxon>
        <taxon>Staphylococcus</taxon>
    </lineage>
</organism>
<evidence type="ECO:0000255" key="1">
    <source>
        <dbReference type="HAMAP-Rule" id="MF_01210"/>
    </source>
</evidence>
<keyword id="KW-0028">Amino-acid biosynthesis</keyword>
<keyword id="KW-0055">Arginine biosynthesis</keyword>
<keyword id="KW-0067">ATP-binding</keyword>
<keyword id="KW-0436">Ligase</keyword>
<keyword id="KW-0460">Magnesium</keyword>
<keyword id="KW-0464">Manganese</keyword>
<keyword id="KW-0479">Metal-binding</keyword>
<keyword id="KW-0547">Nucleotide-binding</keyword>
<keyword id="KW-0665">Pyrimidine biosynthesis</keyword>
<keyword id="KW-1185">Reference proteome</keyword>
<keyword id="KW-0677">Repeat</keyword>
<proteinExistence type="inferred from homology"/>
<sequence>MPKNKDINTILVIGSGPIIIGQAAEFDYAGTQACLALKEEGYKVILVNSNPATIMTDKEIADKVYIEPLTHDFIARIIRKEQPDALLPTLGGQTGLNMAIQLHDSGVLESNNVQLLGTKLSSIQQAEDRELFRSLMNELDVPVPESDIVNTVEQAFAFKEQVGYPLIVRPAFTMGGTGGGICHNDEELKEVVTNGLHYSPATQCLIEKSIAGFKEIEYEVMRDKNDNAIVVCNMENIDPVGIHTGDSVVVAPSQTLTDVEYQMLRDVSLKVIRALGIEGGCNVQLALDPHSMNYYIIEVNPRVSRSSALASKATGYPIAKLAAKIAVGLTLDEMLNPVTGTSYAAFEPALDYVISKIPRFPFDKFEKGERVLGTQMKATGEVMAIGRTYEESLLKAIRSLEYGVHHLGLPNGESYDLDYIKERILQQDDERLFFIGEAIRRGTTLEEIHEMTQIDYFFLNKFQHIIDIEHELKDHKGDIEYLKYAKDYGFSDKVIAHRFDMTEDEVNQLRKTNDIKPVYKMVDTCAAEFESSTPYYYGTYERDNESVVTDKEKVIVLGSGPIRIGQGVEFDYATVHAVWAIQNAGYEAIIVNNNPETVSTDFSISDKLYFEPLTVEDVMNIIDLEQPKGVVVQFGGQTAINLAEKLAEKGVQILGTSLENLNRAEDRKEFEALLNKIDVPQPKGKTATSPEEALENAREIGYPVVVRPSYVLGGRAMEIVYNDAELGNYIREAVKASPEHPVLVDRYLTGKEIEVDAICDGDTVIIPGIMEHIERAGVHSGDSIAVYPPQTLSEEDIKTLESYTTKLAKGLDIIGLINIQFVLAHDGVYVLEVNPRSSRTVPFLSKITNIPMAQLAMRAILGEKLSDLGYQPGLQPYTEGVFVKAPVFSFNKLKNVDITLGPEMKSTGEVMGKDLTLEKALFKGLTASGVEVKDHGTVLITVSDKDKDEMVKVAKRLNEVGYKILATEGTAQKLADNHIPVETVGKIGGEDDLLTRIQNGEVQIVINTMTKGKTIERDGFQIRRASVENGVPCLTSLDTANALTNVIESMSFTMKQM</sequence>
<protein>
    <recommendedName>
        <fullName evidence="1">Carbamoyl phosphate synthase large chain</fullName>
        <ecNumber evidence="1">6.3.4.16</ecNumber>
        <ecNumber evidence="1">6.3.5.5</ecNumber>
    </recommendedName>
    <alternativeName>
        <fullName evidence="1">Carbamoyl phosphate synthetase ammonia chain</fullName>
    </alternativeName>
</protein>
<dbReference type="EC" id="6.3.4.16" evidence="1"/>
<dbReference type="EC" id="6.3.5.5" evidence="1"/>
<dbReference type="EMBL" id="AM295250">
    <property type="protein sequence ID" value="CAL27727.1"/>
    <property type="molecule type" value="Genomic_DNA"/>
</dbReference>
<dbReference type="RefSeq" id="WP_015900069.1">
    <property type="nucleotide sequence ID" value="NC_012121.1"/>
</dbReference>
<dbReference type="SMR" id="B9DPN2"/>
<dbReference type="GeneID" id="93795752"/>
<dbReference type="KEGG" id="sca:SCA_0817"/>
<dbReference type="eggNOG" id="COG0458">
    <property type="taxonomic scope" value="Bacteria"/>
</dbReference>
<dbReference type="HOGENOM" id="CLU_000513_1_3_9"/>
<dbReference type="OrthoDB" id="9804197at2"/>
<dbReference type="BioCyc" id="SCAR396513:SCA_RS04135-MONOMER"/>
<dbReference type="UniPathway" id="UPA00068">
    <property type="reaction ID" value="UER00171"/>
</dbReference>
<dbReference type="UniPathway" id="UPA00070">
    <property type="reaction ID" value="UER00115"/>
</dbReference>
<dbReference type="Proteomes" id="UP000000444">
    <property type="component" value="Chromosome"/>
</dbReference>
<dbReference type="GO" id="GO:0005737">
    <property type="term" value="C:cytoplasm"/>
    <property type="evidence" value="ECO:0007669"/>
    <property type="project" value="TreeGrafter"/>
</dbReference>
<dbReference type="GO" id="GO:0005524">
    <property type="term" value="F:ATP binding"/>
    <property type="evidence" value="ECO:0007669"/>
    <property type="project" value="UniProtKB-UniRule"/>
</dbReference>
<dbReference type="GO" id="GO:0004087">
    <property type="term" value="F:carbamoyl-phosphate synthase (ammonia) activity"/>
    <property type="evidence" value="ECO:0007669"/>
    <property type="project" value="RHEA"/>
</dbReference>
<dbReference type="GO" id="GO:0004088">
    <property type="term" value="F:carbamoyl-phosphate synthase (glutamine-hydrolyzing) activity"/>
    <property type="evidence" value="ECO:0007669"/>
    <property type="project" value="UniProtKB-UniRule"/>
</dbReference>
<dbReference type="GO" id="GO:0046872">
    <property type="term" value="F:metal ion binding"/>
    <property type="evidence" value="ECO:0007669"/>
    <property type="project" value="UniProtKB-KW"/>
</dbReference>
<dbReference type="GO" id="GO:0044205">
    <property type="term" value="P:'de novo' UMP biosynthetic process"/>
    <property type="evidence" value="ECO:0007669"/>
    <property type="project" value="UniProtKB-UniRule"/>
</dbReference>
<dbReference type="GO" id="GO:0006541">
    <property type="term" value="P:glutamine metabolic process"/>
    <property type="evidence" value="ECO:0007669"/>
    <property type="project" value="TreeGrafter"/>
</dbReference>
<dbReference type="GO" id="GO:0006526">
    <property type="term" value="P:L-arginine biosynthetic process"/>
    <property type="evidence" value="ECO:0007669"/>
    <property type="project" value="UniProtKB-UniRule"/>
</dbReference>
<dbReference type="CDD" id="cd01424">
    <property type="entry name" value="MGS_CPS_II"/>
    <property type="match status" value="1"/>
</dbReference>
<dbReference type="FunFam" id="1.10.1030.10:FF:000002">
    <property type="entry name" value="Carbamoyl-phosphate synthase large chain"/>
    <property type="match status" value="1"/>
</dbReference>
<dbReference type="FunFam" id="3.30.1490.20:FF:000001">
    <property type="entry name" value="Carbamoyl-phosphate synthase large chain"/>
    <property type="match status" value="1"/>
</dbReference>
<dbReference type="FunFam" id="3.30.470.20:FF:000001">
    <property type="entry name" value="Carbamoyl-phosphate synthase large chain"/>
    <property type="match status" value="1"/>
</dbReference>
<dbReference type="FunFam" id="3.30.470.20:FF:000026">
    <property type="entry name" value="Carbamoyl-phosphate synthase large chain"/>
    <property type="match status" value="1"/>
</dbReference>
<dbReference type="FunFam" id="3.40.50.1380:FF:000011">
    <property type="entry name" value="Carbamoyl-phosphate synthase large chain"/>
    <property type="match status" value="1"/>
</dbReference>
<dbReference type="FunFam" id="3.40.50.20:FF:000001">
    <property type="entry name" value="Carbamoyl-phosphate synthase large chain"/>
    <property type="match status" value="2"/>
</dbReference>
<dbReference type="Gene3D" id="3.40.50.20">
    <property type="match status" value="2"/>
</dbReference>
<dbReference type="Gene3D" id="3.30.1490.20">
    <property type="entry name" value="ATP-grasp fold, A domain"/>
    <property type="match status" value="1"/>
</dbReference>
<dbReference type="Gene3D" id="3.30.470.20">
    <property type="entry name" value="ATP-grasp fold, B domain"/>
    <property type="match status" value="2"/>
</dbReference>
<dbReference type="Gene3D" id="1.10.1030.10">
    <property type="entry name" value="Carbamoyl-phosphate synthetase, large subunit oligomerisation domain"/>
    <property type="match status" value="1"/>
</dbReference>
<dbReference type="Gene3D" id="3.40.50.1380">
    <property type="entry name" value="Methylglyoxal synthase-like domain"/>
    <property type="match status" value="1"/>
</dbReference>
<dbReference type="HAMAP" id="MF_01210_A">
    <property type="entry name" value="CPSase_L_chain_A"/>
    <property type="match status" value="1"/>
</dbReference>
<dbReference type="HAMAP" id="MF_01210_B">
    <property type="entry name" value="CPSase_L_chain_B"/>
    <property type="match status" value="1"/>
</dbReference>
<dbReference type="InterPro" id="IPR011761">
    <property type="entry name" value="ATP-grasp"/>
</dbReference>
<dbReference type="InterPro" id="IPR013815">
    <property type="entry name" value="ATP_grasp_subdomain_1"/>
</dbReference>
<dbReference type="InterPro" id="IPR006275">
    <property type="entry name" value="CarbamoylP_synth_lsu"/>
</dbReference>
<dbReference type="InterPro" id="IPR005480">
    <property type="entry name" value="CarbamoylP_synth_lsu_oligo"/>
</dbReference>
<dbReference type="InterPro" id="IPR036897">
    <property type="entry name" value="CarbamoylP_synth_lsu_oligo_sf"/>
</dbReference>
<dbReference type="InterPro" id="IPR005479">
    <property type="entry name" value="CbamoylP_synth_lsu-like_ATP-bd"/>
</dbReference>
<dbReference type="InterPro" id="IPR005483">
    <property type="entry name" value="CbamoylP_synth_lsu_CPSase_dom"/>
</dbReference>
<dbReference type="InterPro" id="IPR011607">
    <property type="entry name" value="MGS-like_dom"/>
</dbReference>
<dbReference type="InterPro" id="IPR036914">
    <property type="entry name" value="MGS-like_dom_sf"/>
</dbReference>
<dbReference type="InterPro" id="IPR033937">
    <property type="entry name" value="MGS_CPS_CarB"/>
</dbReference>
<dbReference type="InterPro" id="IPR016185">
    <property type="entry name" value="PreATP-grasp_dom_sf"/>
</dbReference>
<dbReference type="NCBIfam" id="TIGR01369">
    <property type="entry name" value="CPSaseII_lrg"/>
    <property type="match status" value="1"/>
</dbReference>
<dbReference type="NCBIfam" id="NF003671">
    <property type="entry name" value="PRK05294.1"/>
    <property type="match status" value="1"/>
</dbReference>
<dbReference type="NCBIfam" id="NF009455">
    <property type="entry name" value="PRK12815.1"/>
    <property type="match status" value="1"/>
</dbReference>
<dbReference type="PANTHER" id="PTHR11405:SF53">
    <property type="entry name" value="CARBAMOYL-PHOSPHATE SYNTHASE [AMMONIA], MITOCHONDRIAL"/>
    <property type="match status" value="1"/>
</dbReference>
<dbReference type="PANTHER" id="PTHR11405">
    <property type="entry name" value="CARBAMOYLTRANSFERASE FAMILY MEMBER"/>
    <property type="match status" value="1"/>
</dbReference>
<dbReference type="Pfam" id="PF02786">
    <property type="entry name" value="CPSase_L_D2"/>
    <property type="match status" value="2"/>
</dbReference>
<dbReference type="Pfam" id="PF02787">
    <property type="entry name" value="CPSase_L_D3"/>
    <property type="match status" value="1"/>
</dbReference>
<dbReference type="Pfam" id="PF02142">
    <property type="entry name" value="MGS"/>
    <property type="match status" value="1"/>
</dbReference>
<dbReference type="PRINTS" id="PR00098">
    <property type="entry name" value="CPSASE"/>
</dbReference>
<dbReference type="SMART" id="SM01096">
    <property type="entry name" value="CPSase_L_D3"/>
    <property type="match status" value="1"/>
</dbReference>
<dbReference type="SMART" id="SM01209">
    <property type="entry name" value="GARS_A"/>
    <property type="match status" value="1"/>
</dbReference>
<dbReference type="SMART" id="SM00851">
    <property type="entry name" value="MGS"/>
    <property type="match status" value="1"/>
</dbReference>
<dbReference type="SUPFAM" id="SSF48108">
    <property type="entry name" value="Carbamoyl phosphate synthetase, large subunit connection domain"/>
    <property type="match status" value="1"/>
</dbReference>
<dbReference type="SUPFAM" id="SSF56059">
    <property type="entry name" value="Glutathione synthetase ATP-binding domain-like"/>
    <property type="match status" value="2"/>
</dbReference>
<dbReference type="SUPFAM" id="SSF52335">
    <property type="entry name" value="Methylglyoxal synthase-like"/>
    <property type="match status" value="1"/>
</dbReference>
<dbReference type="SUPFAM" id="SSF52440">
    <property type="entry name" value="PreATP-grasp domain"/>
    <property type="match status" value="2"/>
</dbReference>
<dbReference type="PROSITE" id="PS50975">
    <property type="entry name" value="ATP_GRASP"/>
    <property type="match status" value="2"/>
</dbReference>
<dbReference type="PROSITE" id="PS00866">
    <property type="entry name" value="CPSASE_1"/>
    <property type="match status" value="2"/>
</dbReference>
<dbReference type="PROSITE" id="PS00867">
    <property type="entry name" value="CPSASE_2"/>
    <property type="match status" value="2"/>
</dbReference>
<dbReference type="PROSITE" id="PS51855">
    <property type="entry name" value="MGS"/>
    <property type="match status" value="1"/>
</dbReference>